<gene>
    <name type="ordered locus">CGSHiEE_00455</name>
</gene>
<protein>
    <recommendedName>
        <fullName evidence="1">UPF0114 protein CGSHiEE_00455</fullName>
    </recommendedName>
</protein>
<evidence type="ECO:0000255" key="1">
    <source>
        <dbReference type="HAMAP-Rule" id="MF_00143"/>
    </source>
</evidence>
<organism>
    <name type="scientific">Haemophilus influenzae (strain PittEE)</name>
    <dbReference type="NCBI Taxonomy" id="374930"/>
    <lineage>
        <taxon>Bacteria</taxon>
        <taxon>Pseudomonadati</taxon>
        <taxon>Pseudomonadota</taxon>
        <taxon>Gammaproteobacteria</taxon>
        <taxon>Pasteurellales</taxon>
        <taxon>Pasteurellaceae</taxon>
        <taxon>Haemophilus</taxon>
    </lineage>
</organism>
<comment type="subcellular location">
    <subcellularLocation>
        <location evidence="1">Cell membrane</location>
        <topology evidence="1">Multi-pass membrane protein</topology>
    </subcellularLocation>
</comment>
<comment type="similarity">
    <text evidence="1">Belongs to the UPF0114 family.</text>
</comment>
<reference key="1">
    <citation type="journal article" date="2007" name="Genome Biol.">
        <title>Characterization and modeling of the Haemophilus influenzae core and supragenomes based on the complete genomic sequences of Rd and 12 clinical nontypeable strains.</title>
        <authorList>
            <person name="Hogg J.S."/>
            <person name="Hu F.Z."/>
            <person name="Janto B."/>
            <person name="Boissy R."/>
            <person name="Hayes J."/>
            <person name="Keefe R."/>
            <person name="Post J.C."/>
            <person name="Ehrlich G.D."/>
        </authorList>
    </citation>
    <scope>NUCLEOTIDE SEQUENCE [LARGE SCALE GENOMIC DNA]</scope>
    <source>
        <strain>PittEE</strain>
    </source>
</reference>
<feature type="chain" id="PRO_1000009481" description="UPF0114 protein CGSHiEE_00455">
    <location>
        <begin position="1"/>
        <end position="183"/>
    </location>
</feature>
<feature type="transmembrane region" description="Helical" evidence="1">
    <location>
        <begin position="30"/>
        <end position="50"/>
    </location>
</feature>
<feature type="transmembrane region" description="Helical" evidence="1">
    <location>
        <begin position="68"/>
        <end position="88"/>
    </location>
</feature>
<feature type="transmembrane region" description="Helical" evidence="1">
    <location>
        <begin position="124"/>
        <end position="144"/>
    </location>
</feature>
<feature type="transmembrane region" description="Helical" evidence="1">
    <location>
        <begin position="150"/>
        <end position="170"/>
    </location>
</feature>
<accession>A5U9Y4</accession>
<proteinExistence type="inferred from homology"/>
<name>Y455_HAEIE</name>
<keyword id="KW-1003">Cell membrane</keyword>
<keyword id="KW-0472">Membrane</keyword>
<keyword id="KW-0812">Transmembrane</keyword>
<keyword id="KW-1133">Transmembrane helix</keyword>
<sequence length="183" mass="20814">MKENKPVDPYAKYNEQSNIIAKIIFASRWLQVPIYLGLIVTLAIYSYKFIKGLWELVINVNDMDSNTIMLGVLNLIDVVMIANLLVMVTIGGYEIFVSKLRTRNHPDQPEWMSHVNATVLKVKLSMSIIGISSIHMLQTFVNASNMPEKTMMWQLLLHLGFLVSAIALAYTDKILYSTSHKTH</sequence>
<dbReference type="EMBL" id="CP000671">
    <property type="protein sequence ID" value="ABQ97585.1"/>
    <property type="molecule type" value="Genomic_DNA"/>
</dbReference>
<dbReference type="KEGG" id="hip:CGSHiEE_00455"/>
<dbReference type="HOGENOM" id="CLU_097887_0_0_6"/>
<dbReference type="GO" id="GO:0005886">
    <property type="term" value="C:plasma membrane"/>
    <property type="evidence" value="ECO:0007669"/>
    <property type="project" value="UniProtKB-SubCell"/>
</dbReference>
<dbReference type="HAMAP" id="MF_00143">
    <property type="entry name" value="UPF0114"/>
    <property type="match status" value="1"/>
</dbReference>
<dbReference type="InterPro" id="IPR005134">
    <property type="entry name" value="UPF0114"/>
</dbReference>
<dbReference type="InterPro" id="IPR020761">
    <property type="entry name" value="UPF0114_bac"/>
</dbReference>
<dbReference type="NCBIfam" id="TIGR00645">
    <property type="entry name" value="HI0507"/>
    <property type="match status" value="1"/>
</dbReference>
<dbReference type="PANTHER" id="PTHR38596">
    <property type="entry name" value="UPF0114 PROTEIN YQHA"/>
    <property type="match status" value="1"/>
</dbReference>
<dbReference type="PANTHER" id="PTHR38596:SF1">
    <property type="entry name" value="UPF0114 PROTEIN YQHA"/>
    <property type="match status" value="1"/>
</dbReference>
<dbReference type="Pfam" id="PF03350">
    <property type="entry name" value="UPF0114"/>
    <property type="match status" value="1"/>
</dbReference>